<gene>
    <name evidence="1" type="primary">acpP</name>
    <name type="ordered locus">TT_C0046</name>
</gene>
<organism>
    <name type="scientific">Thermus thermophilus (strain ATCC BAA-163 / DSM 7039 / HB27)</name>
    <dbReference type="NCBI Taxonomy" id="262724"/>
    <lineage>
        <taxon>Bacteria</taxon>
        <taxon>Thermotogati</taxon>
        <taxon>Deinococcota</taxon>
        <taxon>Deinococci</taxon>
        <taxon>Thermales</taxon>
        <taxon>Thermaceae</taxon>
        <taxon>Thermus</taxon>
    </lineage>
</organism>
<dbReference type="EMBL" id="AE017221">
    <property type="protein sequence ID" value="AAS80394.1"/>
    <property type="molecule type" value="Genomic_DNA"/>
</dbReference>
<dbReference type="RefSeq" id="WP_008631656.1">
    <property type="nucleotide sequence ID" value="NC_005835.1"/>
</dbReference>
<dbReference type="SMR" id="Q72LL3"/>
<dbReference type="GeneID" id="3168477"/>
<dbReference type="KEGG" id="tth:TT_C0046"/>
<dbReference type="eggNOG" id="COG0236">
    <property type="taxonomic scope" value="Bacteria"/>
</dbReference>
<dbReference type="HOGENOM" id="CLU_108696_5_1_0"/>
<dbReference type="OrthoDB" id="9804551at2"/>
<dbReference type="UniPathway" id="UPA00094"/>
<dbReference type="Proteomes" id="UP000000592">
    <property type="component" value="Chromosome"/>
</dbReference>
<dbReference type="GO" id="GO:0005829">
    <property type="term" value="C:cytosol"/>
    <property type="evidence" value="ECO:0007669"/>
    <property type="project" value="TreeGrafter"/>
</dbReference>
<dbReference type="GO" id="GO:0016020">
    <property type="term" value="C:membrane"/>
    <property type="evidence" value="ECO:0007669"/>
    <property type="project" value="GOC"/>
</dbReference>
<dbReference type="GO" id="GO:0000035">
    <property type="term" value="F:acyl binding"/>
    <property type="evidence" value="ECO:0007669"/>
    <property type="project" value="TreeGrafter"/>
</dbReference>
<dbReference type="GO" id="GO:0000036">
    <property type="term" value="F:acyl carrier activity"/>
    <property type="evidence" value="ECO:0007669"/>
    <property type="project" value="UniProtKB-UniRule"/>
</dbReference>
<dbReference type="GO" id="GO:0009245">
    <property type="term" value="P:lipid A biosynthetic process"/>
    <property type="evidence" value="ECO:0007669"/>
    <property type="project" value="TreeGrafter"/>
</dbReference>
<dbReference type="FunFam" id="1.10.1200.10:FF:000003">
    <property type="entry name" value="Acyl carrier protein"/>
    <property type="match status" value="1"/>
</dbReference>
<dbReference type="Gene3D" id="1.10.1200.10">
    <property type="entry name" value="ACP-like"/>
    <property type="match status" value="1"/>
</dbReference>
<dbReference type="HAMAP" id="MF_01217">
    <property type="entry name" value="Acyl_carrier"/>
    <property type="match status" value="1"/>
</dbReference>
<dbReference type="InterPro" id="IPR003231">
    <property type="entry name" value="ACP"/>
</dbReference>
<dbReference type="InterPro" id="IPR036736">
    <property type="entry name" value="ACP-like_sf"/>
</dbReference>
<dbReference type="InterPro" id="IPR009081">
    <property type="entry name" value="PP-bd_ACP"/>
</dbReference>
<dbReference type="InterPro" id="IPR006162">
    <property type="entry name" value="Ppantetheine_attach_site"/>
</dbReference>
<dbReference type="NCBIfam" id="TIGR00517">
    <property type="entry name" value="acyl_carrier"/>
    <property type="match status" value="1"/>
</dbReference>
<dbReference type="NCBIfam" id="NF002148">
    <property type="entry name" value="PRK00982.1-2"/>
    <property type="match status" value="1"/>
</dbReference>
<dbReference type="NCBIfam" id="NF002150">
    <property type="entry name" value="PRK00982.1-4"/>
    <property type="match status" value="1"/>
</dbReference>
<dbReference type="NCBIfam" id="NF002151">
    <property type="entry name" value="PRK00982.1-5"/>
    <property type="match status" value="1"/>
</dbReference>
<dbReference type="PANTHER" id="PTHR20863">
    <property type="entry name" value="ACYL CARRIER PROTEIN"/>
    <property type="match status" value="1"/>
</dbReference>
<dbReference type="PANTHER" id="PTHR20863:SF76">
    <property type="entry name" value="CARRIER DOMAIN-CONTAINING PROTEIN"/>
    <property type="match status" value="1"/>
</dbReference>
<dbReference type="Pfam" id="PF00550">
    <property type="entry name" value="PP-binding"/>
    <property type="match status" value="1"/>
</dbReference>
<dbReference type="SUPFAM" id="SSF47336">
    <property type="entry name" value="ACP-like"/>
    <property type="match status" value="1"/>
</dbReference>
<dbReference type="PROSITE" id="PS50075">
    <property type="entry name" value="CARRIER"/>
    <property type="match status" value="1"/>
</dbReference>
<dbReference type="PROSITE" id="PS00012">
    <property type="entry name" value="PHOSPHOPANTETHEINE"/>
    <property type="match status" value="1"/>
</dbReference>
<protein>
    <recommendedName>
        <fullName evidence="1">Acyl carrier protein</fullName>
        <shortName evidence="1">ACP</shortName>
    </recommendedName>
</protein>
<evidence type="ECO:0000255" key="1">
    <source>
        <dbReference type="HAMAP-Rule" id="MF_01217"/>
    </source>
</evidence>
<evidence type="ECO:0000255" key="2">
    <source>
        <dbReference type="PROSITE-ProRule" id="PRU00258"/>
    </source>
</evidence>
<name>ACP_THET2</name>
<proteinExistence type="inferred from homology"/>
<comment type="function">
    <text evidence="1">Carrier of the growing fatty acid chain in fatty acid biosynthesis.</text>
</comment>
<comment type="pathway">
    <text evidence="1">Lipid metabolism; fatty acid biosynthesis.</text>
</comment>
<comment type="subcellular location">
    <subcellularLocation>
        <location evidence="1">Cytoplasm</location>
    </subcellularLocation>
</comment>
<comment type="PTM">
    <text evidence="1">4'-phosphopantetheine is transferred from CoA to a specific serine of apo-ACP by AcpS. This modification is essential for activity because fatty acids are bound in thioester linkage to the sulfhydryl of the prosthetic group.</text>
</comment>
<comment type="similarity">
    <text evidence="1">Belongs to the acyl carrier protein (ACP) family.</text>
</comment>
<keyword id="KW-0963">Cytoplasm</keyword>
<keyword id="KW-0275">Fatty acid biosynthesis</keyword>
<keyword id="KW-0276">Fatty acid metabolism</keyword>
<keyword id="KW-0444">Lipid biosynthesis</keyword>
<keyword id="KW-0443">Lipid metabolism</keyword>
<keyword id="KW-0596">Phosphopantetheine</keyword>
<keyword id="KW-0597">Phosphoprotein</keyword>
<sequence length="80" mass="9014">MTEQEIFEKVKAVIADKLQVEPEKVTLEARFIEDLGADSLDTVELIMGLEDEFGLEISDEEAEKIRTVKDAVEYIKAKLG</sequence>
<reference key="1">
    <citation type="journal article" date="2004" name="Nat. Biotechnol.">
        <title>The genome sequence of the extreme thermophile Thermus thermophilus.</title>
        <authorList>
            <person name="Henne A."/>
            <person name="Brueggemann H."/>
            <person name="Raasch C."/>
            <person name="Wiezer A."/>
            <person name="Hartsch T."/>
            <person name="Liesegang H."/>
            <person name="Johann A."/>
            <person name="Lienard T."/>
            <person name="Gohl O."/>
            <person name="Martinez-Arias R."/>
            <person name="Jacobi C."/>
            <person name="Starkuviene V."/>
            <person name="Schlenczeck S."/>
            <person name="Dencker S."/>
            <person name="Huber R."/>
            <person name="Klenk H.-P."/>
            <person name="Kramer W."/>
            <person name="Merkl R."/>
            <person name="Gottschalk G."/>
            <person name="Fritz H.-J."/>
        </authorList>
    </citation>
    <scope>NUCLEOTIDE SEQUENCE [LARGE SCALE GENOMIC DNA]</scope>
    <source>
        <strain>ATCC BAA-163 / DSM 7039 / HB27</strain>
    </source>
</reference>
<feature type="chain" id="PRO_1000085617" description="Acyl carrier protein">
    <location>
        <begin position="1"/>
        <end position="80"/>
    </location>
</feature>
<feature type="domain" description="Carrier" evidence="2">
    <location>
        <begin position="4"/>
        <end position="79"/>
    </location>
</feature>
<feature type="modified residue" description="O-(pantetheine 4'-phosphoryl)serine" evidence="2">
    <location>
        <position position="39"/>
    </location>
</feature>
<accession>Q72LL3</accession>